<sequence>MEKIKVKIKGKEYEVEKGTPLGKIFELAGIKDALGGVINGKIIDLQTPVRESGEIKPVYRGSKESLEIMRHSLAHIMAQALKELYGAKKVHLGVGPTTEEGFYYDVEVEGHKITEEDLPKIEQKMKEIIERDYPILRRELSREEAIKLFDKLKEKYKIDIIKEIPEEEVISVYEQGDFIDLCKGPHLPSTGKAGAFKLTSISGAYWKGRSDQPQLTRIYGIAYWSDKEVKERLKFYEEVKKRDHRRLGKELEFFTIDDNVGAGLILWLPRGAIYRKVLEDYLREEHLKRGYQLVYTPHVGKSKLWETSGHLECYKQNMFPSMKIDEEEYYVKPMNCPFHIAIYKSRTRSYKELPLKLFELGTVYRYELSGVLHGLLRVRGFTQDDAHIVCTPEQVNDVIRETLDFALSTLKDFGFNEFKIYLSTRPEYSIGSDEQWEVSQNALKKAIEDLGYEYEIDEGGGAFYGPKIDVKIRDAIGRMWQLSTIQFDFNLPERFDMTYVGPDNKKHRPYMIHRALLGSIERFTGILLEHYAGLLPIWLSPTQVMIIPIADRHHEYAKKVYEFLKENGIRAEMDLREERMNAKIRDAELKKIPVILVVGDREAQNNTVSVRTKKEGNLGSMELNKFLDWIKEKIKNKE</sequence>
<reference key="1">
    <citation type="journal article" date="1998" name="Nature">
        <title>The complete genome of the hyperthermophilic bacterium Aquifex aeolicus.</title>
        <authorList>
            <person name="Deckert G."/>
            <person name="Warren P.V."/>
            <person name="Gaasterland T."/>
            <person name="Young W.G."/>
            <person name="Lenox A.L."/>
            <person name="Graham D.E."/>
            <person name="Overbeek R."/>
            <person name="Snead M.A."/>
            <person name="Keller M."/>
            <person name="Aujay M."/>
            <person name="Huber R."/>
            <person name="Feldman R.A."/>
            <person name="Short J.M."/>
            <person name="Olsen G.J."/>
            <person name="Swanson R.V."/>
        </authorList>
    </citation>
    <scope>NUCLEOTIDE SEQUENCE [LARGE SCALE GENOMIC DNA]</scope>
    <source>
        <strain>VF5</strain>
    </source>
</reference>
<name>SYT_AQUAE</name>
<dbReference type="EC" id="6.1.1.3" evidence="1"/>
<dbReference type="EMBL" id="AE000657">
    <property type="protein sequence ID" value="AAC07549.1"/>
    <property type="molecule type" value="Genomic_DNA"/>
</dbReference>
<dbReference type="PIR" id="F70444">
    <property type="entry name" value="F70444"/>
</dbReference>
<dbReference type="RefSeq" id="NP_214149.1">
    <property type="nucleotide sequence ID" value="NC_000918.1"/>
</dbReference>
<dbReference type="RefSeq" id="WP_010881086.1">
    <property type="nucleotide sequence ID" value="NC_000918.1"/>
</dbReference>
<dbReference type="SMR" id="O67583"/>
<dbReference type="FunCoup" id="O67583">
    <property type="interactions" value="465"/>
</dbReference>
<dbReference type="STRING" id="224324.aq_1667"/>
<dbReference type="EnsemblBacteria" id="AAC07549">
    <property type="protein sequence ID" value="AAC07549"/>
    <property type="gene ID" value="aq_1667"/>
</dbReference>
<dbReference type="KEGG" id="aae:aq_1667"/>
<dbReference type="PATRIC" id="fig|224324.8.peg.1290"/>
<dbReference type="eggNOG" id="COG0441">
    <property type="taxonomic scope" value="Bacteria"/>
</dbReference>
<dbReference type="HOGENOM" id="CLU_008554_0_1_0"/>
<dbReference type="InParanoid" id="O67583"/>
<dbReference type="OrthoDB" id="9802304at2"/>
<dbReference type="Proteomes" id="UP000000798">
    <property type="component" value="Chromosome"/>
</dbReference>
<dbReference type="GO" id="GO:0005737">
    <property type="term" value="C:cytoplasm"/>
    <property type="evidence" value="ECO:0007669"/>
    <property type="project" value="UniProtKB-SubCell"/>
</dbReference>
<dbReference type="GO" id="GO:0005524">
    <property type="term" value="F:ATP binding"/>
    <property type="evidence" value="ECO:0007669"/>
    <property type="project" value="UniProtKB-UniRule"/>
</dbReference>
<dbReference type="GO" id="GO:0046872">
    <property type="term" value="F:metal ion binding"/>
    <property type="evidence" value="ECO:0007669"/>
    <property type="project" value="UniProtKB-KW"/>
</dbReference>
<dbReference type="GO" id="GO:0004829">
    <property type="term" value="F:threonine-tRNA ligase activity"/>
    <property type="evidence" value="ECO:0000318"/>
    <property type="project" value="GO_Central"/>
</dbReference>
<dbReference type="GO" id="GO:0000049">
    <property type="term" value="F:tRNA binding"/>
    <property type="evidence" value="ECO:0007669"/>
    <property type="project" value="UniProtKB-KW"/>
</dbReference>
<dbReference type="GO" id="GO:0006435">
    <property type="term" value="P:threonyl-tRNA aminoacylation"/>
    <property type="evidence" value="ECO:0000318"/>
    <property type="project" value="GO_Central"/>
</dbReference>
<dbReference type="CDD" id="cd00860">
    <property type="entry name" value="ThrRS_anticodon"/>
    <property type="match status" value="1"/>
</dbReference>
<dbReference type="CDD" id="cd00771">
    <property type="entry name" value="ThrRS_core"/>
    <property type="match status" value="1"/>
</dbReference>
<dbReference type="FunFam" id="3.30.54.20:FF:000002">
    <property type="entry name" value="Threonine--tRNA ligase"/>
    <property type="match status" value="1"/>
</dbReference>
<dbReference type="FunFam" id="3.30.930.10:FF:000019">
    <property type="entry name" value="Threonine--tRNA ligase"/>
    <property type="match status" value="1"/>
</dbReference>
<dbReference type="FunFam" id="3.40.50.800:FF:000001">
    <property type="entry name" value="Threonine--tRNA ligase"/>
    <property type="match status" value="1"/>
</dbReference>
<dbReference type="FunFam" id="3.30.980.10:FF:000005">
    <property type="entry name" value="Threonyl-tRNA synthetase, mitochondrial"/>
    <property type="match status" value="1"/>
</dbReference>
<dbReference type="Gene3D" id="3.30.54.20">
    <property type="match status" value="1"/>
</dbReference>
<dbReference type="Gene3D" id="3.40.50.800">
    <property type="entry name" value="Anticodon-binding domain"/>
    <property type="match status" value="1"/>
</dbReference>
<dbReference type="Gene3D" id="3.30.930.10">
    <property type="entry name" value="Bira Bifunctional Protein, Domain 2"/>
    <property type="match status" value="1"/>
</dbReference>
<dbReference type="Gene3D" id="3.30.980.10">
    <property type="entry name" value="Threonyl-trna Synthetase, Chain A, domain 2"/>
    <property type="match status" value="1"/>
</dbReference>
<dbReference type="HAMAP" id="MF_00184">
    <property type="entry name" value="Thr_tRNA_synth"/>
    <property type="match status" value="1"/>
</dbReference>
<dbReference type="InterPro" id="IPR002314">
    <property type="entry name" value="aa-tRNA-synt_IIb"/>
</dbReference>
<dbReference type="InterPro" id="IPR006195">
    <property type="entry name" value="aa-tRNA-synth_II"/>
</dbReference>
<dbReference type="InterPro" id="IPR045864">
    <property type="entry name" value="aa-tRNA-synth_II/BPL/LPL"/>
</dbReference>
<dbReference type="InterPro" id="IPR004154">
    <property type="entry name" value="Anticodon-bd"/>
</dbReference>
<dbReference type="InterPro" id="IPR036621">
    <property type="entry name" value="Anticodon-bd_dom_sf"/>
</dbReference>
<dbReference type="InterPro" id="IPR004095">
    <property type="entry name" value="TGS"/>
</dbReference>
<dbReference type="InterPro" id="IPR002320">
    <property type="entry name" value="Thr-tRNA-ligase_IIa"/>
</dbReference>
<dbReference type="InterPro" id="IPR018163">
    <property type="entry name" value="Thr/Ala-tRNA-synth_IIc_edit"/>
</dbReference>
<dbReference type="InterPro" id="IPR047246">
    <property type="entry name" value="ThrRS_anticodon"/>
</dbReference>
<dbReference type="InterPro" id="IPR033728">
    <property type="entry name" value="ThrRS_core"/>
</dbReference>
<dbReference type="InterPro" id="IPR012947">
    <property type="entry name" value="tRNA_SAD"/>
</dbReference>
<dbReference type="NCBIfam" id="TIGR00418">
    <property type="entry name" value="thrS"/>
    <property type="match status" value="1"/>
</dbReference>
<dbReference type="PANTHER" id="PTHR11451:SF44">
    <property type="entry name" value="THREONINE--TRNA LIGASE, CHLOROPLASTIC_MITOCHONDRIAL 2"/>
    <property type="match status" value="1"/>
</dbReference>
<dbReference type="PANTHER" id="PTHR11451">
    <property type="entry name" value="THREONINE-TRNA LIGASE"/>
    <property type="match status" value="1"/>
</dbReference>
<dbReference type="Pfam" id="PF03129">
    <property type="entry name" value="HGTP_anticodon"/>
    <property type="match status" value="1"/>
</dbReference>
<dbReference type="Pfam" id="PF00587">
    <property type="entry name" value="tRNA-synt_2b"/>
    <property type="match status" value="1"/>
</dbReference>
<dbReference type="Pfam" id="PF07973">
    <property type="entry name" value="tRNA_SAD"/>
    <property type="match status" value="1"/>
</dbReference>
<dbReference type="PRINTS" id="PR01047">
    <property type="entry name" value="TRNASYNTHTHR"/>
</dbReference>
<dbReference type="SMART" id="SM00863">
    <property type="entry name" value="tRNA_SAD"/>
    <property type="match status" value="1"/>
</dbReference>
<dbReference type="SUPFAM" id="SSF52954">
    <property type="entry name" value="Class II aaRS ABD-related"/>
    <property type="match status" value="1"/>
</dbReference>
<dbReference type="SUPFAM" id="SSF55681">
    <property type="entry name" value="Class II aaRS and biotin synthetases"/>
    <property type="match status" value="1"/>
</dbReference>
<dbReference type="SUPFAM" id="SSF55186">
    <property type="entry name" value="ThrRS/AlaRS common domain"/>
    <property type="match status" value="1"/>
</dbReference>
<dbReference type="PROSITE" id="PS50862">
    <property type="entry name" value="AA_TRNA_LIGASE_II"/>
    <property type="match status" value="1"/>
</dbReference>
<dbReference type="PROSITE" id="PS51880">
    <property type="entry name" value="TGS"/>
    <property type="match status" value="1"/>
</dbReference>
<accession>O67583</accession>
<organism>
    <name type="scientific">Aquifex aeolicus (strain VF5)</name>
    <dbReference type="NCBI Taxonomy" id="224324"/>
    <lineage>
        <taxon>Bacteria</taxon>
        <taxon>Pseudomonadati</taxon>
        <taxon>Aquificota</taxon>
        <taxon>Aquificia</taxon>
        <taxon>Aquificales</taxon>
        <taxon>Aquificaceae</taxon>
        <taxon>Aquifex</taxon>
    </lineage>
</organism>
<comment type="function">
    <text evidence="1">Catalyzes the attachment of threonine to tRNA(Thr) in a two-step reaction: L-threonine is first activated by ATP to form Thr-AMP and then transferred to the acceptor end of tRNA(Thr). Also edits incorrectly charged L-seryl-tRNA(Thr).</text>
</comment>
<comment type="catalytic activity">
    <reaction evidence="1">
        <text>tRNA(Thr) + L-threonine + ATP = L-threonyl-tRNA(Thr) + AMP + diphosphate + H(+)</text>
        <dbReference type="Rhea" id="RHEA:24624"/>
        <dbReference type="Rhea" id="RHEA-COMP:9670"/>
        <dbReference type="Rhea" id="RHEA-COMP:9704"/>
        <dbReference type="ChEBI" id="CHEBI:15378"/>
        <dbReference type="ChEBI" id="CHEBI:30616"/>
        <dbReference type="ChEBI" id="CHEBI:33019"/>
        <dbReference type="ChEBI" id="CHEBI:57926"/>
        <dbReference type="ChEBI" id="CHEBI:78442"/>
        <dbReference type="ChEBI" id="CHEBI:78534"/>
        <dbReference type="ChEBI" id="CHEBI:456215"/>
        <dbReference type="EC" id="6.1.1.3"/>
    </reaction>
</comment>
<comment type="cofactor">
    <cofactor evidence="1">
        <name>Zn(2+)</name>
        <dbReference type="ChEBI" id="CHEBI:29105"/>
    </cofactor>
    <text evidence="1">Binds 1 zinc ion per subunit.</text>
</comment>
<comment type="subunit">
    <text evidence="1">Homodimer.</text>
</comment>
<comment type="subcellular location">
    <subcellularLocation>
        <location evidence="1">Cytoplasm</location>
    </subcellularLocation>
</comment>
<comment type="similarity">
    <text evidence="1">Belongs to the class-II aminoacyl-tRNA synthetase family.</text>
</comment>
<gene>
    <name evidence="1" type="primary">thrS</name>
    <name type="ordered locus">aq_1667</name>
</gene>
<proteinExistence type="inferred from homology"/>
<keyword id="KW-0030">Aminoacyl-tRNA synthetase</keyword>
<keyword id="KW-0067">ATP-binding</keyword>
<keyword id="KW-0963">Cytoplasm</keyword>
<keyword id="KW-0436">Ligase</keyword>
<keyword id="KW-0479">Metal-binding</keyword>
<keyword id="KW-0547">Nucleotide-binding</keyword>
<keyword id="KW-0648">Protein biosynthesis</keyword>
<keyword id="KW-1185">Reference proteome</keyword>
<keyword id="KW-0694">RNA-binding</keyword>
<keyword id="KW-0820">tRNA-binding</keyword>
<keyword id="KW-0862">Zinc</keyword>
<evidence type="ECO:0000255" key="1">
    <source>
        <dbReference type="HAMAP-Rule" id="MF_00184"/>
    </source>
</evidence>
<evidence type="ECO:0000255" key="2">
    <source>
        <dbReference type="PROSITE-ProRule" id="PRU01228"/>
    </source>
</evidence>
<feature type="chain" id="PRO_0000100933" description="Threonine--tRNA ligase">
    <location>
        <begin position="1"/>
        <end position="638"/>
    </location>
</feature>
<feature type="domain" description="TGS" evidence="2">
    <location>
        <begin position="1"/>
        <end position="59"/>
    </location>
</feature>
<feature type="region of interest" description="Catalytic" evidence="1">
    <location>
        <begin position="243"/>
        <end position="536"/>
    </location>
</feature>
<feature type="binding site" evidence="1">
    <location>
        <position position="336"/>
    </location>
    <ligand>
        <name>Zn(2+)</name>
        <dbReference type="ChEBI" id="CHEBI:29105"/>
    </ligand>
</feature>
<feature type="binding site" evidence="1">
    <location>
        <position position="387"/>
    </location>
    <ligand>
        <name>Zn(2+)</name>
        <dbReference type="ChEBI" id="CHEBI:29105"/>
    </ligand>
</feature>
<feature type="binding site" evidence="1">
    <location>
        <position position="513"/>
    </location>
    <ligand>
        <name>Zn(2+)</name>
        <dbReference type="ChEBI" id="CHEBI:29105"/>
    </ligand>
</feature>
<protein>
    <recommendedName>
        <fullName evidence="1">Threonine--tRNA ligase</fullName>
        <ecNumber evidence="1">6.1.1.3</ecNumber>
    </recommendedName>
    <alternativeName>
        <fullName evidence="1">Threonyl-tRNA synthetase</fullName>
        <shortName evidence="1">ThrRS</shortName>
    </alternativeName>
</protein>